<comment type="function">
    <text evidence="1">Catalyzes the phosphorolysis of diverse nucleosides, yielding D-ribose 1-phosphate and the respective free bases. Can use uridine, adenosine, guanosine, cytidine, thymidine, inosine and xanthosine as substrates. Also catalyzes the reverse reactions.</text>
</comment>
<comment type="catalytic activity">
    <reaction evidence="1">
        <text>a purine D-ribonucleoside + phosphate = a purine nucleobase + alpha-D-ribose 1-phosphate</text>
        <dbReference type="Rhea" id="RHEA:19805"/>
        <dbReference type="ChEBI" id="CHEBI:26386"/>
        <dbReference type="ChEBI" id="CHEBI:43474"/>
        <dbReference type="ChEBI" id="CHEBI:57720"/>
        <dbReference type="ChEBI" id="CHEBI:142355"/>
        <dbReference type="EC" id="2.4.2.1"/>
    </reaction>
</comment>
<comment type="catalytic activity">
    <reaction evidence="1">
        <text>adenosine + phosphate = alpha-D-ribose 1-phosphate + adenine</text>
        <dbReference type="Rhea" id="RHEA:27642"/>
        <dbReference type="ChEBI" id="CHEBI:16335"/>
        <dbReference type="ChEBI" id="CHEBI:16708"/>
        <dbReference type="ChEBI" id="CHEBI:43474"/>
        <dbReference type="ChEBI" id="CHEBI:57720"/>
        <dbReference type="EC" id="2.4.2.1"/>
    </reaction>
</comment>
<comment type="catalytic activity">
    <reaction evidence="1">
        <text>cytidine + phosphate = cytosine + alpha-D-ribose 1-phosphate</text>
        <dbReference type="Rhea" id="RHEA:52540"/>
        <dbReference type="ChEBI" id="CHEBI:16040"/>
        <dbReference type="ChEBI" id="CHEBI:17562"/>
        <dbReference type="ChEBI" id="CHEBI:43474"/>
        <dbReference type="ChEBI" id="CHEBI:57720"/>
        <dbReference type="EC" id="2.4.2.2"/>
    </reaction>
</comment>
<comment type="catalytic activity">
    <reaction evidence="1">
        <text>guanosine + phosphate = alpha-D-ribose 1-phosphate + guanine</text>
        <dbReference type="Rhea" id="RHEA:13233"/>
        <dbReference type="ChEBI" id="CHEBI:16235"/>
        <dbReference type="ChEBI" id="CHEBI:16750"/>
        <dbReference type="ChEBI" id="CHEBI:43474"/>
        <dbReference type="ChEBI" id="CHEBI:57720"/>
        <dbReference type="EC" id="2.4.2.1"/>
    </reaction>
</comment>
<comment type="catalytic activity">
    <reaction evidence="1">
        <text>inosine + phosphate = alpha-D-ribose 1-phosphate + hypoxanthine</text>
        <dbReference type="Rhea" id="RHEA:27646"/>
        <dbReference type="ChEBI" id="CHEBI:17368"/>
        <dbReference type="ChEBI" id="CHEBI:17596"/>
        <dbReference type="ChEBI" id="CHEBI:43474"/>
        <dbReference type="ChEBI" id="CHEBI:57720"/>
        <dbReference type="EC" id="2.4.2.1"/>
    </reaction>
</comment>
<comment type="catalytic activity">
    <reaction evidence="1">
        <text>thymidine + phosphate = 2-deoxy-alpha-D-ribose 1-phosphate + thymine</text>
        <dbReference type="Rhea" id="RHEA:16037"/>
        <dbReference type="ChEBI" id="CHEBI:17748"/>
        <dbReference type="ChEBI" id="CHEBI:17821"/>
        <dbReference type="ChEBI" id="CHEBI:43474"/>
        <dbReference type="ChEBI" id="CHEBI:57259"/>
        <dbReference type="EC" id="2.4.2.2"/>
    </reaction>
</comment>
<comment type="catalytic activity">
    <reaction evidence="1">
        <text>uridine + phosphate = alpha-D-ribose 1-phosphate + uracil</text>
        <dbReference type="Rhea" id="RHEA:24388"/>
        <dbReference type="ChEBI" id="CHEBI:16704"/>
        <dbReference type="ChEBI" id="CHEBI:17568"/>
        <dbReference type="ChEBI" id="CHEBI:43474"/>
        <dbReference type="ChEBI" id="CHEBI:57720"/>
        <dbReference type="EC" id="2.4.2.2"/>
    </reaction>
</comment>
<comment type="catalytic activity">
    <reaction evidence="1">
        <text>xanthosine + phosphate = alpha-D-ribose 1-phosphate + xanthine</text>
        <dbReference type="Rhea" id="RHEA:27638"/>
        <dbReference type="ChEBI" id="CHEBI:17712"/>
        <dbReference type="ChEBI" id="CHEBI:18107"/>
        <dbReference type="ChEBI" id="CHEBI:43474"/>
        <dbReference type="ChEBI" id="CHEBI:57720"/>
        <dbReference type="EC" id="2.4.2.1"/>
    </reaction>
</comment>
<comment type="similarity">
    <text evidence="1">Belongs to the nucleoside phosphorylase PpnP family.</text>
</comment>
<reference key="1">
    <citation type="journal article" date="2002" name="Nucleic Acids Res.">
        <title>Genome sequence of Shigella flexneri 2a: insights into pathogenicity through comparison with genomes of Escherichia coli K12 and O157.</title>
        <authorList>
            <person name="Jin Q."/>
            <person name="Yuan Z."/>
            <person name="Xu J."/>
            <person name="Wang Y."/>
            <person name="Shen Y."/>
            <person name="Lu W."/>
            <person name="Wang J."/>
            <person name="Liu H."/>
            <person name="Yang J."/>
            <person name="Yang F."/>
            <person name="Zhang X."/>
            <person name="Zhang J."/>
            <person name="Yang G."/>
            <person name="Wu H."/>
            <person name="Qu D."/>
            <person name="Dong J."/>
            <person name="Sun L."/>
            <person name="Xue Y."/>
            <person name="Zhao A."/>
            <person name="Gao Y."/>
            <person name="Zhu J."/>
            <person name="Kan B."/>
            <person name="Ding K."/>
            <person name="Chen S."/>
            <person name="Cheng H."/>
            <person name="Yao Z."/>
            <person name="He B."/>
            <person name="Chen R."/>
            <person name="Ma D."/>
            <person name="Qiang B."/>
            <person name="Wen Y."/>
            <person name="Hou Y."/>
            <person name="Yu J."/>
        </authorList>
    </citation>
    <scope>NUCLEOTIDE SEQUENCE [LARGE SCALE GENOMIC DNA]</scope>
    <source>
        <strain>301 / Serotype 2a</strain>
    </source>
</reference>
<reference key="2">
    <citation type="journal article" date="2003" name="Infect. Immun.">
        <title>Complete genome sequence and comparative genomics of Shigella flexneri serotype 2a strain 2457T.</title>
        <authorList>
            <person name="Wei J."/>
            <person name="Goldberg M.B."/>
            <person name="Burland V."/>
            <person name="Venkatesan M.M."/>
            <person name="Deng W."/>
            <person name="Fournier G."/>
            <person name="Mayhew G.F."/>
            <person name="Plunkett G. III"/>
            <person name="Rose D.J."/>
            <person name="Darling A."/>
            <person name="Mau B."/>
            <person name="Perna N.T."/>
            <person name="Payne S.M."/>
            <person name="Runyen-Janecky L.J."/>
            <person name="Zhou S."/>
            <person name="Schwartz D.C."/>
            <person name="Blattner F.R."/>
        </authorList>
    </citation>
    <scope>NUCLEOTIDE SEQUENCE [LARGE SCALE GENOMIC DNA]</scope>
    <source>
        <strain>ATCC 700930 / 2457T / Serotype 2a</strain>
    </source>
</reference>
<dbReference type="EC" id="2.4.2.1" evidence="1"/>
<dbReference type="EC" id="2.4.2.2" evidence="1"/>
<dbReference type="EMBL" id="AE005674">
    <property type="protein sequence ID" value="AAN41986.1"/>
    <property type="molecule type" value="Genomic_DNA"/>
</dbReference>
<dbReference type="EMBL" id="AE014073">
    <property type="protein sequence ID" value="AAP15864.1"/>
    <property type="molecule type" value="Genomic_DNA"/>
</dbReference>
<dbReference type="RefSeq" id="WP_000941942.1">
    <property type="nucleotide sequence ID" value="NZ_WPGW01000023.1"/>
</dbReference>
<dbReference type="SMR" id="P0C040"/>
<dbReference type="STRING" id="198214.SF0327"/>
<dbReference type="PaxDb" id="198214-SF0327"/>
<dbReference type="GeneID" id="93777070"/>
<dbReference type="KEGG" id="sfl:SF0327"/>
<dbReference type="KEGG" id="sfx:S0335"/>
<dbReference type="PATRIC" id="fig|198214.7.peg.375"/>
<dbReference type="HOGENOM" id="CLU_157874_0_0_6"/>
<dbReference type="Proteomes" id="UP000001006">
    <property type="component" value="Chromosome"/>
</dbReference>
<dbReference type="Proteomes" id="UP000002673">
    <property type="component" value="Chromosome"/>
</dbReference>
<dbReference type="GO" id="GO:0005829">
    <property type="term" value="C:cytosol"/>
    <property type="evidence" value="ECO:0007669"/>
    <property type="project" value="TreeGrafter"/>
</dbReference>
<dbReference type="GO" id="GO:0047975">
    <property type="term" value="F:guanosine phosphorylase activity"/>
    <property type="evidence" value="ECO:0007669"/>
    <property type="project" value="UniProtKB-EC"/>
</dbReference>
<dbReference type="GO" id="GO:0004731">
    <property type="term" value="F:purine-nucleoside phosphorylase activity"/>
    <property type="evidence" value="ECO:0007669"/>
    <property type="project" value="UniProtKB-UniRule"/>
</dbReference>
<dbReference type="GO" id="GO:0009032">
    <property type="term" value="F:thymidine phosphorylase activity"/>
    <property type="evidence" value="ECO:0007669"/>
    <property type="project" value="UniProtKB-EC"/>
</dbReference>
<dbReference type="GO" id="GO:0004850">
    <property type="term" value="F:uridine phosphorylase activity"/>
    <property type="evidence" value="ECO:0007669"/>
    <property type="project" value="UniProtKB-EC"/>
</dbReference>
<dbReference type="CDD" id="cd20296">
    <property type="entry name" value="cupin_PpnP-like"/>
    <property type="match status" value="1"/>
</dbReference>
<dbReference type="FunFam" id="2.60.120.10:FF:000016">
    <property type="entry name" value="Pyrimidine/purine nucleoside phosphorylase"/>
    <property type="match status" value="1"/>
</dbReference>
<dbReference type="Gene3D" id="2.60.120.10">
    <property type="entry name" value="Jelly Rolls"/>
    <property type="match status" value="1"/>
</dbReference>
<dbReference type="HAMAP" id="MF_01537">
    <property type="entry name" value="Nucleos_phosphorylase_PpnP"/>
    <property type="match status" value="1"/>
</dbReference>
<dbReference type="InterPro" id="IPR009664">
    <property type="entry name" value="Ppnp"/>
</dbReference>
<dbReference type="InterPro" id="IPR014710">
    <property type="entry name" value="RmlC-like_jellyroll"/>
</dbReference>
<dbReference type="InterPro" id="IPR011051">
    <property type="entry name" value="RmlC_Cupin_sf"/>
</dbReference>
<dbReference type="NCBIfam" id="NF007875">
    <property type="entry name" value="PRK10579.1"/>
    <property type="match status" value="1"/>
</dbReference>
<dbReference type="PANTHER" id="PTHR36540">
    <property type="entry name" value="PYRIMIDINE/PURINE NUCLEOSIDE PHOSPHORYLASE"/>
    <property type="match status" value="1"/>
</dbReference>
<dbReference type="PANTHER" id="PTHR36540:SF1">
    <property type="entry name" value="PYRIMIDINE_PURINE NUCLEOSIDE PHOSPHORYLASE"/>
    <property type="match status" value="1"/>
</dbReference>
<dbReference type="Pfam" id="PF06865">
    <property type="entry name" value="Ppnp"/>
    <property type="match status" value="1"/>
</dbReference>
<dbReference type="SUPFAM" id="SSF51182">
    <property type="entry name" value="RmlC-like cupins"/>
    <property type="match status" value="1"/>
</dbReference>
<accession>P0C040</accession>
<accession>P36768</accession>
<accession>P77343</accession>
<name>PPNP_SHIFL</name>
<gene>
    <name evidence="1" type="primary">ppnP</name>
    <name type="ordered locus">SF0327</name>
    <name type="ordered locus">S0335</name>
</gene>
<feature type="chain" id="PRO_0000211783" description="Pyrimidine/purine nucleoside phosphorylase">
    <location>
        <begin position="1"/>
        <end position="94"/>
    </location>
</feature>
<organism>
    <name type="scientific">Shigella flexneri</name>
    <dbReference type="NCBI Taxonomy" id="623"/>
    <lineage>
        <taxon>Bacteria</taxon>
        <taxon>Pseudomonadati</taxon>
        <taxon>Pseudomonadota</taxon>
        <taxon>Gammaproteobacteria</taxon>
        <taxon>Enterobacterales</taxon>
        <taxon>Enterobacteriaceae</taxon>
        <taxon>Shigella</taxon>
    </lineage>
</organism>
<protein>
    <recommendedName>
        <fullName evidence="1">Pyrimidine/purine nucleoside phosphorylase</fullName>
        <ecNumber evidence="1">2.4.2.1</ecNumber>
        <ecNumber evidence="1">2.4.2.2</ecNumber>
    </recommendedName>
    <alternativeName>
        <fullName evidence="1">Adenosine phosphorylase</fullName>
    </alternativeName>
    <alternativeName>
        <fullName evidence="1">Cytidine phosphorylase</fullName>
    </alternativeName>
    <alternativeName>
        <fullName evidence="1">Guanosine phosphorylase</fullName>
    </alternativeName>
    <alternativeName>
        <fullName evidence="1">Inosine phosphorylase</fullName>
    </alternativeName>
    <alternativeName>
        <fullName evidence="1">Thymidine phosphorylase</fullName>
    </alternativeName>
    <alternativeName>
        <fullName evidence="1">Uridine phosphorylase</fullName>
    </alternativeName>
    <alternativeName>
        <fullName evidence="1">Xanthosine phosphorylase</fullName>
    </alternativeName>
</protein>
<sequence length="94" mass="10234">MLQSNEYFSGKVKSIGFSSSSTGRASVGVMVEGEYTFSTAEPEEMTVISGALNVLLPDATDWQVYEAGSVFNVPGHSEFHLQVAEPTSYLCRYL</sequence>
<proteinExistence type="inferred from homology"/>
<evidence type="ECO:0000255" key="1">
    <source>
        <dbReference type="HAMAP-Rule" id="MF_01537"/>
    </source>
</evidence>
<keyword id="KW-0328">Glycosyltransferase</keyword>
<keyword id="KW-1185">Reference proteome</keyword>
<keyword id="KW-0808">Transferase</keyword>